<dbReference type="EC" id="2.7.8.-"/>
<dbReference type="EMBL" id="CP000029">
    <property type="protein sequence ID" value="AAW53753.1"/>
    <property type="molecule type" value="Genomic_DNA"/>
</dbReference>
<dbReference type="RefSeq" id="WP_001830354.1">
    <property type="nucleotide sequence ID" value="NC_002976.3"/>
</dbReference>
<dbReference type="SMR" id="Q5HR16"/>
<dbReference type="STRING" id="176279.SERP0379"/>
<dbReference type="GeneID" id="50019355"/>
<dbReference type="KEGG" id="ser:SERP0379"/>
<dbReference type="eggNOG" id="COG1368">
    <property type="taxonomic scope" value="Bacteria"/>
</dbReference>
<dbReference type="HOGENOM" id="CLU_021310_0_0_9"/>
<dbReference type="UniPathway" id="UPA00556"/>
<dbReference type="Proteomes" id="UP000000531">
    <property type="component" value="Chromosome"/>
</dbReference>
<dbReference type="GO" id="GO:0005576">
    <property type="term" value="C:extracellular region"/>
    <property type="evidence" value="ECO:0007669"/>
    <property type="project" value="UniProtKB-SubCell"/>
</dbReference>
<dbReference type="GO" id="GO:0005886">
    <property type="term" value="C:plasma membrane"/>
    <property type="evidence" value="ECO:0007669"/>
    <property type="project" value="UniProtKB-SubCell"/>
</dbReference>
<dbReference type="GO" id="GO:0046872">
    <property type="term" value="F:metal ion binding"/>
    <property type="evidence" value="ECO:0007669"/>
    <property type="project" value="UniProtKB-KW"/>
</dbReference>
<dbReference type="GO" id="GO:0016740">
    <property type="term" value="F:transferase activity"/>
    <property type="evidence" value="ECO:0007669"/>
    <property type="project" value="UniProtKB-KW"/>
</dbReference>
<dbReference type="GO" id="GO:0071555">
    <property type="term" value="P:cell wall organization"/>
    <property type="evidence" value="ECO:0007669"/>
    <property type="project" value="UniProtKB-KW"/>
</dbReference>
<dbReference type="GO" id="GO:0070395">
    <property type="term" value="P:lipoteichoic acid biosynthetic process"/>
    <property type="evidence" value="ECO:0007669"/>
    <property type="project" value="UniProtKB-UniPathway"/>
</dbReference>
<dbReference type="CDD" id="cd16015">
    <property type="entry name" value="LTA_synthase"/>
    <property type="match status" value="1"/>
</dbReference>
<dbReference type="Gene3D" id="3.30.1120.170">
    <property type="match status" value="1"/>
</dbReference>
<dbReference type="Gene3D" id="3.40.720.10">
    <property type="entry name" value="Alkaline Phosphatase, subunit A"/>
    <property type="match status" value="1"/>
</dbReference>
<dbReference type="InterPro" id="IPR017850">
    <property type="entry name" value="Alkaline_phosphatase_core_sf"/>
</dbReference>
<dbReference type="InterPro" id="IPR012160">
    <property type="entry name" value="LtaS-like"/>
</dbReference>
<dbReference type="InterPro" id="IPR050448">
    <property type="entry name" value="OpgB/LTA_synthase_biosynth"/>
</dbReference>
<dbReference type="InterPro" id="IPR000917">
    <property type="entry name" value="Sulfatase_N"/>
</dbReference>
<dbReference type="PANTHER" id="PTHR47371">
    <property type="entry name" value="LIPOTEICHOIC ACID SYNTHASE"/>
    <property type="match status" value="1"/>
</dbReference>
<dbReference type="PANTHER" id="PTHR47371:SF3">
    <property type="entry name" value="PHOSPHOGLYCEROL TRANSFERASE I"/>
    <property type="match status" value="1"/>
</dbReference>
<dbReference type="Pfam" id="PF00884">
    <property type="entry name" value="Sulfatase"/>
    <property type="match status" value="1"/>
</dbReference>
<dbReference type="PIRSF" id="PIRSF005091">
    <property type="entry name" value="Mmb_sulf_HI1246"/>
    <property type="match status" value="1"/>
</dbReference>
<dbReference type="SUPFAM" id="SSF53649">
    <property type="entry name" value="Alkaline phosphatase-like"/>
    <property type="match status" value="1"/>
</dbReference>
<name>LTAS_STAEQ</name>
<comment type="function">
    <text evidence="1">Catalyzes the polymerization of lipoteichoic acid (LTA) polyglycerol phosphate, a reaction that presumably uses phosphatidylglycerol (PG) as substrate. Is required for staphylococcal growth and cell division process (By similarity).</text>
</comment>
<comment type="pathway">
    <text>Cell wall biogenesis; lipoteichoic acid biosynthesis.</text>
</comment>
<comment type="subcellular location">
    <subcellularLocation>
        <location evidence="3">Cell membrane</location>
        <topology evidence="3">Multi-pass membrane protein</topology>
    </subcellularLocation>
</comment>
<comment type="subcellular location">
    <molecule>Processed glycerol phosphate lipoteichoic acid synthase</molecule>
    <subcellularLocation>
        <location evidence="1">Secreted</location>
    </subcellularLocation>
</comment>
<comment type="PTM">
    <text evidence="1">Proteolytically cleaved.</text>
</comment>
<comment type="similarity">
    <text evidence="3">Belongs to the LTA synthase family.</text>
</comment>
<feature type="chain" id="PRO_0000305370" description="Glycerol phosphate lipoteichoic acid synthase">
    <location>
        <begin position="1"/>
        <end position="217"/>
    </location>
</feature>
<feature type="chain" id="PRO_0000305371" description="Processed glycerol phosphate lipoteichoic acid synthase">
    <location>
        <begin position="218"/>
        <end position="646"/>
    </location>
</feature>
<feature type="topological domain" description="Cytoplasmic" evidence="2">
    <location>
        <begin position="1"/>
        <end position="7"/>
    </location>
</feature>
<feature type="transmembrane region" description="Helical" evidence="2">
    <location>
        <begin position="8"/>
        <end position="28"/>
    </location>
</feature>
<feature type="topological domain" description="Extracellular" evidence="2">
    <location>
        <begin position="29"/>
        <end position="43"/>
    </location>
</feature>
<feature type="transmembrane region" description="Helical" evidence="2">
    <location>
        <begin position="44"/>
        <end position="64"/>
    </location>
</feature>
<feature type="topological domain" description="Cytoplasmic" evidence="2">
    <location>
        <begin position="65"/>
        <end position="68"/>
    </location>
</feature>
<feature type="transmembrane region" description="Helical" evidence="2">
    <location>
        <begin position="69"/>
        <end position="89"/>
    </location>
</feature>
<feature type="topological domain" description="Extracellular" evidence="2">
    <location>
        <begin position="90"/>
        <end position="119"/>
    </location>
</feature>
<feature type="transmembrane region" description="Helical" evidence="2">
    <location>
        <begin position="120"/>
        <end position="140"/>
    </location>
</feature>
<feature type="topological domain" description="Cytoplasmic" evidence="2">
    <location>
        <begin position="141"/>
        <end position="153"/>
    </location>
</feature>
<feature type="transmembrane region" description="Helical" evidence="2">
    <location>
        <begin position="154"/>
        <end position="174"/>
    </location>
</feature>
<feature type="topological domain" description="Extracellular" evidence="2">
    <location>
        <begin position="175"/>
        <end position="646"/>
    </location>
</feature>
<feature type="active site" evidence="1">
    <location>
        <position position="300"/>
    </location>
</feature>
<feature type="binding site" evidence="1">
    <location>
        <position position="255"/>
    </location>
    <ligand>
        <name>Mn(2+)</name>
        <dbReference type="ChEBI" id="CHEBI:29035"/>
    </ligand>
</feature>
<feature type="binding site" evidence="1">
    <location>
        <position position="300"/>
    </location>
    <ligand>
        <name>Mn(2+)</name>
        <dbReference type="ChEBI" id="CHEBI:29035"/>
    </ligand>
</feature>
<feature type="binding site" evidence="1">
    <location>
        <position position="416"/>
    </location>
    <ligand>
        <name>substrate</name>
    </ligand>
</feature>
<feature type="binding site" evidence="1">
    <location>
        <position position="475"/>
    </location>
    <ligand>
        <name>Mn(2+)</name>
        <dbReference type="ChEBI" id="CHEBI:29035"/>
    </ligand>
</feature>
<feature type="binding site" evidence="1">
    <location>
        <position position="476"/>
    </location>
    <ligand>
        <name>Mn(2+)</name>
        <dbReference type="ChEBI" id="CHEBI:29035"/>
    </ligand>
</feature>
<feature type="site" description="Cleavage" evidence="1">
    <location>
        <begin position="217"/>
        <end position="218"/>
    </location>
</feature>
<keyword id="KW-1003">Cell membrane</keyword>
<keyword id="KW-0961">Cell wall biogenesis/degradation</keyword>
<keyword id="KW-0464">Manganese</keyword>
<keyword id="KW-0472">Membrane</keyword>
<keyword id="KW-0479">Metal-binding</keyword>
<keyword id="KW-1185">Reference proteome</keyword>
<keyword id="KW-0964">Secreted</keyword>
<keyword id="KW-0808">Transferase</keyword>
<keyword id="KW-0812">Transmembrane</keyword>
<keyword id="KW-1133">Transmembrane helix</keyword>
<proteinExistence type="inferred from homology"/>
<evidence type="ECO:0000250" key="1"/>
<evidence type="ECO:0000255" key="2"/>
<evidence type="ECO:0000305" key="3"/>
<protein>
    <recommendedName>
        <fullName>Lipoteichoic acid synthase</fullName>
    </recommendedName>
    <component>
        <recommendedName>
            <fullName>Glycerol phosphate lipoteichoic acid synthase</fullName>
            <shortName>LTA synthase</shortName>
            <ecNumber>2.7.8.-</ecNumber>
        </recommendedName>
        <alternativeName>
            <fullName>Polyglycerol phosphate synthase</fullName>
        </alternativeName>
    </component>
    <component>
        <recommendedName>
            <fullName>Processed glycerol phosphate lipoteichoic acid synthase</fullName>
        </recommendedName>
    </component>
</protein>
<gene>
    <name type="primary">ltaS</name>
    <name type="ordered locus">SERP0379</name>
</gene>
<organism>
    <name type="scientific">Staphylococcus epidermidis (strain ATCC 35984 / DSM 28319 / BCRC 17069 / CCUG 31568 / BM 3577 / RP62A)</name>
    <dbReference type="NCBI Taxonomy" id="176279"/>
    <lineage>
        <taxon>Bacteria</taxon>
        <taxon>Bacillati</taxon>
        <taxon>Bacillota</taxon>
        <taxon>Bacilli</taxon>
        <taxon>Bacillales</taxon>
        <taxon>Staphylococcaceae</taxon>
        <taxon>Staphylococcus</taxon>
    </lineage>
</organism>
<reference key="1">
    <citation type="journal article" date="2005" name="J. Bacteriol.">
        <title>Insights on evolution of virulence and resistance from the complete genome analysis of an early methicillin-resistant Staphylococcus aureus strain and a biofilm-producing methicillin-resistant Staphylococcus epidermidis strain.</title>
        <authorList>
            <person name="Gill S.R."/>
            <person name="Fouts D.E."/>
            <person name="Archer G.L."/>
            <person name="Mongodin E.F."/>
            <person name="DeBoy R.T."/>
            <person name="Ravel J."/>
            <person name="Paulsen I.T."/>
            <person name="Kolonay J.F."/>
            <person name="Brinkac L.M."/>
            <person name="Beanan M.J."/>
            <person name="Dodson R.J."/>
            <person name="Daugherty S.C."/>
            <person name="Madupu R."/>
            <person name="Angiuoli S.V."/>
            <person name="Durkin A.S."/>
            <person name="Haft D.H."/>
            <person name="Vamathevan J.J."/>
            <person name="Khouri H."/>
            <person name="Utterback T.R."/>
            <person name="Lee C."/>
            <person name="Dimitrov G."/>
            <person name="Jiang L."/>
            <person name="Qin H."/>
            <person name="Weidman J."/>
            <person name="Tran K."/>
            <person name="Kang K.H."/>
            <person name="Hance I.R."/>
            <person name="Nelson K.E."/>
            <person name="Fraser C.M."/>
        </authorList>
    </citation>
    <scope>NUCLEOTIDE SEQUENCE [LARGE SCALE GENOMIC DNA]</scope>
    <source>
        <strain>ATCC 35984 / DSM 28319 / BCRC 17069 / CCUG 31568 / BM 3577 / RP62A</strain>
    </source>
</reference>
<sequence length="646" mass="74437">MSLPKKKIGIFAFFLLTVFTITLKTYFSYYVDFSLGVKGLVQNLILLMNPYSLIALVLSVFLFFKGKKAFWFIFIGGFLLTFLLYANVVYFRFFSDFLTFSTLNQAGNVESMGGAVSASFKWYDFVYFIDTIIYLAILIFKRKWLDNRAFSKKFVPVVMATSVALFFLNLAFAETDRPELLTRTFDHKYLVKYLGPYNFTVYDGVKTIENNQQKALASEDDLTKVLNYTKQKRTEPNPEYYGAAKKKNIIKIHLESFQTFLINKKVNGKEVTPFLNKLSSGNQDFTYFPNFFHQTGQGKTSDSEFTMDNSLYGLPQGSAYSLKGDNTYQSLPAILDQKQGYTSNVMHGDYKTFWNRDQVYKHFGIDNFYDATYYDMSDDNIVNLGLKDKPFFKASADYQSKMKKPFYSHLITLTNHYPFTLDEEDASIDKPNTGDSTVDGYIQTAHYLDQALEEYITDLKKKGLYDNSVIMIYGDHYGISENHNNAMEKLLGEKITPAKFTDLNRTGFWLKVPGKSGGVNKEYAGQMDVMPTLLHLVGIDSKNYLMFGSDMFSKQHNNVVPFRNGDFITEDYKYVNGKIYSNKDNELLTEKPKDFDKNKKQVEKDLEMSDSVLNGDLFRFYKNPDFKKVNPGKYEYKSGPKGNEKK</sequence>
<accession>Q5HR16</accession>